<comment type="function">
    <text evidence="4 5">Plays an important role in primordial germ cell (PGC) maintenance and efficiency of PGC migration.</text>
</comment>
<comment type="subcellular location">
    <subcellularLocation>
        <location evidence="3 5">Cytoplasm</location>
    </subcellularLocation>
</comment>
<comment type="tissue specificity">
    <text evidence="3 4 5">Enriched in the mitochondrial cloud of stage I oocytes, before becoming concentrated at the tip of the vegetal cortex in stage II oocytes. Expression becomes localized to the germ plasm of stage III-IV oocytes and early cleavage stages. At the tailbud stage, localizes to the migrating primordial germ cells (PGCs) until PGC migration is complete (stage 40), at which point expression disappears. In the adult, expressed in the brain, ovary, eye, muscle, spinal cord and very weakly in adipocytes.</text>
</comment>
<comment type="developmental stage">
    <text evidence="3 4 5">Expressed maternally. Prominent in the egg and during early cleavage stages. Expression decreases slightly between neurula and late tailbud stage before elevating again at the tadpole stages.</text>
</comment>
<comment type="similarity">
    <text evidence="7">Belongs to the GRIP2 family.</text>
</comment>
<organism>
    <name type="scientific">Xenopus laevis</name>
    <name type="common">African clawed frog</name>
    <dbReference type="NCBI Taxonomy" id="8355"/>
    <lineage>
        <taxon>Eukaryota</taxon>
        <taxon>Metazoa</taxon>
        <taxon>Chordata</taxon>
        <taxon>Craniata</taxon>
        <taxon>Vertebrata</taxon>
        <taxon>Euteleostomi</taxon>
        <taxon>Amphibia</taxon>
        <taxon>Batrachia</taxon>
        <taxon>Anura</taxon>
        <taxon>Pipoidea</taxon>
        <taxon>Pipidae</taxon>
        <taxon>Xenopodinae</taxon>
        <taxon>Xenopus</taxon>
        <taxon>Xenopus</taxon>
    </lineage>
</organism>
<reference evidence="7 9" key="1">
    <citation type="journal article" date="2007" name="Biochem. Biophys. Res. Commun.">
        <title>The mRNA coding for Xenopus glutamate receptor interacting protein 2 (XGRIP2) is maternally transcribed, transported through the late pathway and localized to the germ plasm.</title>
        <authorList>
            <person name="Kaneshiro K."/>
            <person name="Miyauchi M."/>
            <person name="Tanigawa Y."/>
            <person name="Ikenishi K."/>
            <person name="Komiya T."/>
        </authorList>
    </citation>
    <scope>NUCLEOTIDE SEQUENCE [MRNA]</scope>
    <scope>SUBCELLULAR LOCATION</scope>
    <scope>TISSUE SPECIFICITY</scope>
    <scope>DEVELOPMENTAL STAGE</scope>
    <source>
        <tissue evidence="9">Ovary</tissue>
    </source>
</reference>
<reference evidence="7 8" key="2">
    <citation type="journal article" date="2007" name="Dev. Biol.">
        <title>XGRIP2.1 is encoded by a vegetally localizing, maternal mRNA and functions in germ cell development and anteroposterior PGC positioning in Xenopus laevis.</title>
        <authorList>
            <person name="Tarbashevich K."/>
            <person name="Koebernick K."/>
            <person name="Pieler T."/>
        </authorList>
    </citation>
    <scope>NUCLEOTIDE SEQUENCE [MRNA]</scope>
    <scope>FUNCTION</scope>
    <scope>SUBCELLULAR LOCATION</scope>
    <scope>TISSUE SPECIFICITY</scope>
    <scope>DEVELOPMENTAL STAGE</scope>
    <source>
        <tissue evidence="5">Oocyte</tissue>
    </source>
</reference>
<reference evidence="7 10" key="3">
    <citation type="journal article" date="2008" name="Differentiation">
        <title>The efficiency of Xenopus primordial germ cell migration depends on the germplasm mRNA encoding the PDZ domain protein Grip2.</title>
        <authorList>
            <person name="Kirilenko P."/>
            <person name="Weierud F.K."/>
            <person name="Zorn A.M."/>
            <person name="Woodland H.R."/>
        </authorList>
    </citation>
    <scope>NUCLEOTIDE SEQUENCE [MRNA]</scope>
    <scope>FUNCTION</scope>
    <scope>TISSUE SPECIFICITY</scope>
    <scope>DEVELOPMENTAL STAGE</scope>
    <source>
        <tissue evidence="4">Egg</tissue>
    </source>
</reference>
<gene>
    <name evidence="10" type="primary">grip2</name>
    <name evidence="6" type="synonym">grip2.1</name>
</gene>
<keyword id="KW-0963">Cytoplasm</keyword>
<keyword id="KW-0217">Developmental protein</keyword>
<keyword id="KW-1185">Reference proteome</keyword>
<keyword id="KW-0677">Repeat</keyword>
<feature type="chain" id="PRO_0000334504" description="Glutamate receptor-interacting protein 2">
    <location>
        <begin position="1"/>
        <end position="1083"/>
    </location>
</feature>
<feature type="domain" description="PDZ 1" evidence="1">
    <location>
        <begin position="58"/>
        <end position="141"/>
    </location>
</feature>
<feature type="domain" description="PDZ 2" evidence="1">
    <location>
        <begin position="156"/>
        <end position="244"/>
    </location>
</feature>
<feature type="domain" description="PDZ 3" evidence="1">
    <location>
        <begin position="258"/>
        <end position="342"/>
    </location>
</feature>
<feature type="domain" description="PDZ 4" evidence="1">
    <location>
        <begin position="468"/>
        <end position="555"/>
    </location>
</feature>
<feature type="domain" description="PDZ 5" evidence="1">
    <location>
        <begin position="569"/>
        <end position="652"/>
    </location>
</feature>
<feature type="domain" description="PDZ 6" evidence="1">
    <location>
        <begin position="667"/>
        <end position="749"/>
    </location>
</feature>
<feature type="domain" description="PDZ 7" evidence="1">
    <location>
        <begin position="974"/>
        <end position="1056"/>
    </location>
</feature>
<feature type="region of interest" description="Disordered" evidence="2">
    <location>
        <begin position="408"/>
        <end position="460"/>
    </location>
</feature>
<feature type="region of interest" description="Disordered" evidence="2">
    <location>
        <begin position="754"/>
        <end position="783"/>
    </location>
</feature>
<feature type="region of interest" description="Disordered" evidence="2">
    <location>
        <begin position="853"/>
        <end position="872"/>
    </location>
</feature>
<feature type="region of interest" description="Disordered" evidence="2">
    <location>
        <begin position="936"/>
        <end position="965"/>
    </location>
</feature>
<feature type="compositionally biased region" description="Polar residues" evidence="2">
    <location>
        <begin position="408"/>
        <end position="422"/>
    </location>
</feature>
<feature type="compositionally biased region" description="Basic residues" evidence="2">
    <location>
        <begin position="434"/>
        <end position="444"/>
    </location>
</feature>
<feature type="compositionally biased region" description="Polar residues" evidence="2">
    <location>
        <begin position="774"/>
        <end position="783"/>
    </location>
</feature>
<feature type="compositionally biased region" description="Basic and acidic residues" evidence="2">
    <location>
        <begin position="945"/>
        <end position="963"/>
    </location>
</feature>
<feature type="sequence conflict" description="In Ref. 2; ABO36653." evidence="7" ref="2">
    <original>A</original>
    <variation>V</variation>
    <location>
        <position position="41"/>
    </location>
</feature>
<feature type="sequence conflict" description="In Ref. 2; ABO36653." evidence="7" ref="2">
    <original>K</original>
    <variation>R</variation>
    <location>
        <position position="63"/>
    </location>
</feature>
<feature type="sequence conflict" description="In Ref. 3; CAN52354." evidence="7" ref="3">
    <original>S</original>
    <variation>G</variation>
    <location>
        <position position="274"/>
    </location>
</feature>
<feature type="sequence conflict" description="In Ref. 2; ABO36653." evidence="7" ref="2">
    <original>S</original>
    <variation>N</variation>
    <location>
        <position position="344"/>
    </location>
</feature>
<feature type="sequence conflict" description="In Ref. 1; BAF45467." evidence="7" ref="1">
    <original>S</original>
    <variation>F</variation>
    <location>
        <position position="406"/>
    </location>
</feature>
<feature type="sequence conflict" description="In Ref. 2; ABO36653." evidence="7" ref="2">
    <original>S</original>
    <variation>N</variation>
    <location>
        <position position="446"/>
    </location>
</feature>
<feature type="sequence conflict" description="In Ref. 2; ABO36653." evidence="7" ref="2">
    <original>Y</original>
    <variation>C</variation>
    <location>
        <position position="673"/>
    </location>
</feature>
<sequence length="1083" mass="118461">MHFFQTILRWKTAKGQKSVTFKKDDGPYSKGNKDPAGNDLALVSRRQSIPEEFRGVTIVELIKKEGSTLGLTISGGTDKDGKPRVSNLRPGGLAARSDQLNIGDYIKSVNGINLTKLRHEEIISLLKNVGERVVLEVEYELPPGTPDNSSAIIPKTIEITLCKEGNSFGFVMRGGAHEDWHKSRALVVTYVRPGGPADREGTLKVGDRLLCVDGISLHNITHTDALSILRQCSQEGVFQIEYDVALMDTVTNASGPLLVEIAKTPGSTLGISLSTGTHRNKQVIVIDKVKPASVVDRCGALHPGDHILSIDGTSTEHCTQMEATQLLASIIENVKLEILPAHHSRLPLRPPETVKVQKSDHHHCWDPCVNYCHTPHPGHCKTPTWNPTSNQDYCKSLVAANFSSSSVAGTPGFSSQNSNTLPRTVHPMSPRTTMNRRRQKRKDHKSSLSLASSTVGPGGQIIHTESTEIILRGDPLNGFGIQLQGGIFATETLSSPPLIRFIEPDSPAERCGLLQVGDRLLSINGILTEDGTLEEANQLLRDAALSNKVALEIEFDVAESVVPSSGTFHVKLPKRKGVELGITISSSRKPGEPLIISDIKKGSVAHRTGTLEPGDKLLAIDNIRLDNCSMEDAVQILRQCEDLVKLKIRKDEDNSDEQETSGAIIYTVELKRYGGPLGITISGTEEPFDPIVISGLTKRGLAERTGAIHIGDRILAINNISLKGKPLSEAIHLLQMAGETVTLKIKKQTERIFPQRLSDSMNEGSDPEDDLTDSQKTSKLSEIYSTTVPSVDSALESWDGSGIDAGYGSQGTYVPQAVGISLHPHEWRTSRQKSNTPPVEHRKSYPFLDGSFNEQDWEKPTRYPSQPNGLETDHDDSFWRVFGEALEDLETCGQSELLREIEASIMTGSVQDLGLDSSQILLENSSQGGHVLFRRGSHHISSNSPKKENKLSQDARSKKEEVHNAQSLTTELLKVTVQKDMDTDDFGFSVSDGLLEKGVYVNMIRPGGPADRSGLKTYDQILQVNHVRTRDFDCCLTVPLLSDAGDRLDLVISRGLSIKAEEMGVEQIKGPLRMETQTSTKTL</sequence>
<proteinExistence type="evidence at transcript level"/>
<accession>A8E0R9</accession>
<accession>A2Q054</accession>
<accession>A8JL03</accession>
<dbReference type="EMBL" id="AB290863">
    <property type="protein sequence ID" value="BAF45467.1"/>
    <property type="molecule type" value="mRNA"/>
</dbReference>
<dbReference type="EMBL" id="EF139240">
    <property type="protein sequence ID" value="ABO36653.1"/>
    <property type="molecule type" value="mRNA"/>
</dbReference>
<dbReference type="EMBL" id="AM712310">
    <property type="protein sequence ID" value="CAN52354.1"/>
    <property type="molecule type" value="mRNA"/>
</dbReference>
<dbReference type="RefSeq" id="NP_001091382.1">
    <property type="nucleotide sequence ID" value="NM_001097913.1"/>
</dbReference>
<dbReference type="SMR" id="A8E0R9"/>
<dbReference type="GeneID" id="100037236"/>
<dbReference type="KEGG" id="xla:100037236"/>
<dbReference type="AGR" id="Xenbase:XB-GENE-866534"/>
<dbReference type="CTD" id="100037236"/>
<dbReference type="Xenbase" id="XB-GENE-866534">
    <property type="gene designation" value="grip2.L"/>
</dbReference>
<dbReference type="OrthoDB" id="75502at2759"/>
<dbReference type="Proteomes" id="UP000186698">
    <property type="component" value="Chromosome 4L"/>
</dbReference>
<dbReference type="Bgee" id="100037236">
    <property type="expression patterns" value="Expressed in egg cell and 9 other cell types or tissues"/>
</dbReference>
<dbReference type="GO" id="GO:0005938">
    <property type="term" value="C:cell cortex"/>
    <property type="evidence" value="ECO:0000314"/>
    <property type="project" value="UniProtKB"/>
</dbReference>
<dbReference type="GO" id="GO:0005737">
    <property type="term" value="C:cytoplasm"/>
    <property type="evidence" value="ECO:0000314"/>
    <property type="project" value="UniProtKB"/>
</dbReference>
<dbReference type="GO" id="GO:0032019">
    <property type="term" value="C:mitochondrial cloud"/>
    <property type="evidence" value="ECO:0000314"/>
    <property type="project" value="UniProtKB"/>
</dbReference>
<dbReference type="GO" id="GO:0045495">
    <property type="term" value="C:pole plasm"/>
    <property type="evidence" value="ECO:0000314"/>
    <property type="project" value="UniProtKB"/>
</dbReference>
<dbReference type="GO" id="GO:0007281">
    <property type="term" value="P:germ cell development"/>
    <property type="evidence" value="ECO:0000315"/>
    <property type="project" value="UniProtKB"/>
</dbReference>
<dbReference type="GO" id="GO:0008354">
    <property type="term" value="P:germ cell migration"/>
    <property type="evidence" value="ECO:0000315"/>
    <property type="project" value="UniProtKB"/>
</dbReference>
<dbReference type="GO" id="GO:0098887">
    <property type="term" value="P:neurotransmitter receptor transport, endosome to postsynaptic membrane"/>
    <property type="evidence" value="ECO:0000318"/>
    <property type="project" value="GO_Central"/>
</dbReference>
<dbReference type="CDD" id="cd06687">
    <property type="entry name" value="PDZ1_GRIP1-2-like"/>
    <property type="match status" value="1"/>
</dbReference>
<dbReference type="CDD" id="cd06681">
    <property type="entry name" value="PDZ2_GRIP1-2-like"/>
    <property type="match status" value="1"/>
</dbReference>
<dbReference type="CDD" id="cd06684">
    <property type="entry name" value="PDZ3_GRIP1-2-like"/>
    <property type="match status" value="1"/>
</dbReference>
<dbReference type="CDD" id="cd06686">
    <property type="entry name" value="PDZ4_GRIP1-2-like"/>
    <property type="match status" value="1"/>
</dbReference>
<dbReference type="CDD" id="cd06682">
    <property type="entry name" value="PDZ5_GRIP1-2-like"/>
    <property type="match status" value="1"/>
</dbReference>
<dbReference type="CDD" id="cd06683">
    <property type="entry name" value="PDZ6_GRIP1-2-like"/>
    <property type="match status" value="1"/>
</dbReference>
<dbReference type="CDD" id="cd06685">
    <property type="entry name" value="PDZ7_GRIP1-2-like"/>
    <property type="match status" value="1"/>
</dbReference>
<dbReference type="FunFam" id="2.30.42.10:FF:000021">
    <property type="entry name" value="Glutamate receptor interacting protein 1"/>
    <property type="match status" value="1"/>
</dbReference>
<dbReference type="FunFam" id="2.30.42.10:FF:000022">
    <property type="entry name" value="Glutamate receptor interacting protein 1"/>
    <property type="match status" value="1"/>
</dbReference>
<dbReference type="FunFam" id="2.30.42.10:FF:000023">
    <property type="entry name" value="Glutamate receptor interacting protein 1"/>
    <property type="match status" value="1"/>
</dbReference>
<dbReference type="FunFam" id="2.30.42.10:FF:000025">
    <property type="entry name" value="Glutamate receptor interacting protein 1"/>
    <property type="match status" value="1"/>
</dbReference>
<dbReference type="FunFam" id="2.30.42.10:FF:000031">
    <property type="entry name" value="Glutamate receptor interacting protein 1"/>
    <property type="match status" value="1"/>
</dbReference>
<dbReference type="FunFam" id="2.30.42.10:FF:000034">
    <property type="entry name" value="Glutamate receptor interacting protein 1"/>
    <property type="match status" value="1"/>
</dbReference>
<dbReference type="FunFam" id="2.30.42.10:FF:000035">
    <property type="entry name" value="Glutamate receptor interacting protein 1"/>
    <property type="match status" value="1"/>
</dbReference>
<dbReference type="Gene3D" id="2.30.42.10">
    <property type="match status" value="7"/>
</dbReference>
<dbReference type="InterPro" id="IPR043545">
    <property type="entry name" value="GRIP1/2"/>
</dbReference>
<dbReference type="InterPro" id="IPR001478">
    <property type="entry name" value="PDZ"/>
</dbReference>
<dbReference type="InterPro" id="IPR041489">
    <property type="entry name" value="PDZ_6"/>
</dbReference>
<dbReference type="InterPro" id="IPR036034">
    <property type="entry name" value="PDZ_sf"/>
</dbReference>
<dbReference type="PANTHER" id="PTHR46227:SF4">
    <property type="entry name" value="GLUTAMATE RECEPTOR-INTERACTING PROTEIN 2"/>
    <property type="match status" value="1"/>
</dbReference>
<dbReference type="PANTHER" id="PTHR46227">
    <property type="entry name" value="GLUTAMATE RECEPTOR-INTERACTING PROTEIN GRIP"/>
    <property type="match status" value="1"/>
</dbReference>
<dbReference type="Pfam" id="PF00595">
    <property type="entry name" value="PDZ"/>
    <property type="match status" value="6"/>
</dbReference>
<dbReference type="Pfam" id="PF17820">
    <property type="entry name" value="PDZ_6"/>
    <property type="match status" value="1"/>
</dbReference>
<dbReference type="SMART" id="SM00228">
    <property type="entry name" value="PDZ"/>
    <property type="match status" value="7"/>
</dbReference>
<dbReference type="SUPFAM" id="SSF50156">
    <property type="entry name" value="PDZ domain-like"/>
    <property type="match status" value="7"/>
</dbReference>
<dbReference type="PROSITE" id="PS50106">
    <property type="entry name" value="PDZ"/>
    <property type="match status" value="7"/>
</dbReference>
<protein>
    <recommendedName>
        <fullName>Glutamate receptor-interacting protein 2</fullName>
        <shortName>xGRIP2</shortName>
        <shortName>xGRIP2.1</shortName>
    </recommendedName>
</protein>
<evidence type="ECO:0000255" key="1">
    <source>
        <dbReference type="PROSITE-ProRule" id="PRU00143"/>
    </source>
</evidence>
<evidence type="ECO:0000256" key="2">
    <source>
        <dbReference type="SAM" id="MobiDB-lite"/>
    </source>
</evidence>
<evidence type="ECO:0000269" key="3">
    <source>
    </source>
</evidence>
<evidence type="ECO:0000269" key="4">
    <source>
    </source>
</evidence>
<evidence type="ECO:0000269" key="5">
    <source>
    </source>
</evidence>
<evidence type="ECO:0000303" key="6">
    <source>
    </source>
</evidence>
<evidence type="ECO:0000305" key="7"/>
<evidence type="ECO:0000312" key="8">
    <source>
        <dbReference type="EMBL" id="ABO36653.1"/>
    </source>
</evidence>
<evidence type="ECO:0000312" key="9">
    <source>
        <dbReference type="EMBL" id="BAF45467.1"/>
    </source>
</evidence>
<evidence type="ECO:0000312" key="10">
    <source>
        <dbReference type="EMBL" id="CAN52354.1"/>
    </source>
</evidence>
<name>GRIP2_XENLA</name>